<accession>B5XQ77</accession>
<comment type="function">
    <text evidence="1">Na(+)/H(+) antiporter that extrudes sodium in exchange for external protons.</text>
</comment>
<comment type="catalytic activity">
    <reaction evidence="1">
        <text>2 Na(+)(in) + 3 H(+)(out) = 2 Na(+)(out) + 3 H(+)(in)</text>
        <dbReference type="Rhea" id="RHEA:29247"/>
        <dbReference type="ChEBI" id="CHEBI:15378"/>
        <dbReference type="ChEBI" id="CHEBI:29101"/>
    </reaction>
    <physiologicalReaction direction="left-to-right" evidence="1">
        <dbReference type="Rhea" id="RHEA:29248"/>
    </physiologicalReaction>
</comment>
<comment type="subcellular location">
    <subcellularLocation>
        <location evidence="1">Cell inner membrane</location>
        <topology evidence="1">Multi-pass membrane protein</topology>
    </subcellularLocation>
</comment>
<comment type="similarity">
    <text evidence="1">Belongs to the NhaB Na(+)/H(+) (TC 2.A.34) antiporter family.</text>
</comment>
<proteinExistence type="inferred from homology"/>
<protein>
    <recommendedName>
        <fullName evidence="1">Na(+)/H(+) antiporter NhaB</fullName>
    </recommendedName>
    <alternativeName>
        <fullName evidence="1">Sodium/proton antiporter NhaB</fullName>
    </alternativeName>
</protein>
<dbReference type="EMBL" id="CP000964">
    <property type="protein sequence ID" value="ACI09159.1"/>
    <property type="molecule type" value="Genomic_DNA"/>
</dbReference>
<dbReference type="SMR" id="B5XQ77"/>
<dbReference type="KEGG" id="kpe:KPK_1981"/>
<dbReference type="HOGENOM" id="CLU_041110_0_0_6"/>
<dbReference type="Proteomes" id="UP000001734">
    <property type="component" value="Chromosome"/>
</dbReference>
<dbReference type="GO" id="GO:0005886">
    <property type="term" value="C:plasma membrane"/>
    <property type="evidence" value="ECO:0007669"/>
    <property type="project" value="UniProtKB-SubCell"/>
</dbReference>
<dbReference type="GO" id="GO:0015385">
    <property type="term" value="F:sodium:proton antiporter activity"/>
    <property type="evidence" value="ECO:0007669"/>
    <property type="project" value="InterPro"/>
</dbReference>
<dbReference type="HAMAP" id="MF_01599">
    <property type="entry name" value="NhaB"/>
    <property type="match status" value="1"/>
</dbReference>
<dbReference type="InterPro" id="IPR004671">
    <property type="entry name" value="Na+/H+_antiporter_NhaB"/>
</dbReference>
<dbReference type="NCBIfam" id="TIGR00774">
    <property type="entry name" value="NhaB"/>
    <property type="match status" value="1"/>
</dbReference>
<dbReference type="NCBIfam" id="NF007093">
    <property type="entry name" value="PRK09547.1"/>
    <property type="match status" value="1"/>
</dbReference>
<dbReference type="PANTHER" id="PTHR43302:SF1">
    <property type="entry name" value="NA(+)_H(+) ANTIPORTER NHAB"/>
    <property type="match status" value="1"/>
</dbReference>
<dbReference type="PANTHER" id="PTHR43302">
    <property type="entry name" value="TRANSPORTER ARSB-RELATED"/>
    <property type="match status" value="1"/>
</dbReference>
<dbReference type="Pfam" id="PF06450">
    <property type="entry name" value="NhaB"/>
    <property type="match status" value="1"/>
</dbReference>
<gene>
    <name evidence="1" type="primary">nhaB</name>
    <name type="ordered locus">KPK_1981</name>
</gene>
<reference key="1">
    <citation type="journal article" date="2008" name="PLoS Genet.">
        <title>Complete genome sequence of the N2-fixing broad host range endophyte Klebsiella pneumoniae 342 and virulence predictions verified in mice.</title>
        <authorList>
            <person name="Fouts D.E."/>
            <person name="Tyler H.L."/>
            <person name="DeBoy R.T."/>
            <person name="Daugherty S."/>
            <person name="Ren Q."/>
            <person name="Badger J.H."/>
            <person name="Durkin A.S."/>
            <person name="Huot H."/>
            <person name="Shrivastava S."/>
            <person name="Kothari S."/>
            <person name="Dodson R.J."/>
            <person name="Mohamoud Y."/>
            <person name="Khouri H."/>
            <person name="Roesch L.F.W."/>
            <person name="Krogfelt K.A."/>
            <person name="Struve C."/>
            <person name="Triplett E.W."/>
            <person name="Methe B.A."/>
        </authorList>
    </citation>
    <scope>NUCLEOTIDE SEQUENCE [LARGE SCALE GENOMIC DNA]</scope>
    <source>
        <strain>342</strain>
    </source>
</reference>
<keyword id="KW-0050">Antiport</keyword>
<keyword id="KW-0997">Cell inner membrane</keyword>
<keyword id="KW-1003">Cell membrane</keyword>
<keyword id="KW-0406">Ion transport</keyword>
<keyword id="KW-0472">Membrane</keyword>
<keyword id="KW-0915">Sodium</keyword>
<keyword id="KW-0739">Sodium transport</keyword>
<keyword id="KW-0812">Transmembrane</keyword>
<keyword id="KW-1133">Transmembrane helix</keyword>
<keyword id="KW-0813">Transport</keyword>
<sequence length="516" mass="56706">MEISYGRALWRNFLGQSPDWYKLALIIFLIVNPLVFAVAPFVAGWLLVVEFIFTLAMALKCYPLLPGGLLAIEALLIGMTSPAHVREEIAGNLEVLLLLIFMVAGIYFMKQLLLFVFTRLLLGIRSKMLLSLAFCLAAAFLSAFLDALTVVAVVISVAVGFYGIYHRVASARPDDNDLLDDSHIEQHYREVLEQFRGFLRSLMMHAGVGTALGGVMTMVGEPQNLIIAKAAGWHFGEFFIRMAPVTVPVMVCGLLTCLLVEKYRLFGYGEPLPPTVRKVLQDFDDRSRAQRSRQEQLRLLAQAVIGVWLIVALAFHLAEVGLIGLSVIILATTFSGVTDEHAIGKAFTEALPFTALLTVFFAIVAVIIDQQLFTPVIEFVLQASPHAQLSLFYLFNGLLSSISDNVFVGTVYINEAKTALEHGVISLPQFEMLAVAINTGTNLPSVATPNGQAAFLFLLTSALAPLIRLSYGRMVWMALPYTLVLTLVGLLCVEFTLMPVTNWLLAHGWVTTPTLP</sequence>
<feature type="chain" id="PRO_1000148041" description="Na(+)/H(+) antiporter NhaB">
    <location>
        <begin position="1"/>
        <end position="516"/>
    </location>
</feature>
<feature type="transmembrane region" description="Helical" evidence="1">
    <location>
        <begin position="23"/>
        <end position="43"/>
    </location>
</feature>
<feature type="transmembrane region" description="Helical" evidence="1">
    <location>
        <begin position="61"/>
        <end position="80"/>
    </location>
</feature>
<feature type="transmembrane region" description="Helical" evidence="1">
    <location>
        <begin position="97"/>
        <end position="117"/>
    </location>
</feature>
<feature type="transmembrane region" description="Helical" evidence="1">
    <location>
        <begin position="120"/>
        <end position="140"/>
    </location>
</feature>
<feature type="transmembrane region" description="Helical" evidence="1">
    <location>
        <begin position="144"/>
        <end position="164"/>
    </location>
</feature>
<feature type="transmembrane region" description="Helical" evidence="1">
    <location>
        <begin position="202"/>
        <end position="222"/>
    </location>
</feature>
<feature type="transmembrane region" description="Helical" evidence="1">
    <location>
        <begin position="238"/>
        <end position="258"/>
    </location>
</feature>
<feature type="transmembrane region" description="Helical" evidence="1">
    <location>
        <begin position="303"/>
        <end position="323"/>
    </location>
</feature>
<feature type="transmembrane region" description="Helical" evidence="1">
    <location>
        <begin position="348"/>
        <end position="368"/>
    </location>
</feature>
<feature type="transmembrane region" description="Helical" evidence="1">
    <location>
        <begin position="391"/>
        <end position="411"/>
    </location>
</feature>
<feature type="transmembrane region" description="Helical" evidence="1">
    <location>
        <begin position="447"/>
        <end position="467"/>
    </location>
</feature>
<feature type="transmembrane region" description="Helical" evidence="1">
    <location>
        <begin position="475"/>
        <end position="495"/>
    </location>
</feature>
<name>NHAB_KLEP3</name>
<evidence type="ECO:0000255" key="1">
    <source>
        <dbReference type="HAMAP-Rule" id="MF_01599"/>
    </source>
</evidence>
<organism>
    <name type="scientific">Klebsiella pneumoniae (strain 342)</name>
    <dbReference type="NCBI Taxonomy" id="507522"/>
    <lineage>
        <taxon>Bacteria</taxon>
        <taxon>Pseudomonadati</taxon>
        <taxon>Pseudomonadota</taxon>
        <taxon>Gammaproteobacteria</taxon>
        <taxon>Enterobacterales</taxon>
        <taxon>Enterobacteriaceae</taxon>
        <taxon>Klebsiella/Raoultella group</taxon>
        <taxon>Klebsiella</taxon>
        <taxon>Klebsiella pneumoniae complex</taxon>
    </lineage>
</organism>